<organism>
    <name type="scientific">Blochmanniella pennsylvanica (strain BPEN)</name>
    <dbReference type="NCBI Taxonomy" id="291272"/>
    <lineage>
        <taxon>Bacteria</taxon>
        <taxon>Pseudomonadati</taxon>
        <taxon>Pseudomonadota</taxon>
        <taxon>Gammaproteobacteria</taxon>
        <taxon>Enterobacterales</taxon>
        <taxon>Enterobacteriaceae</taxon>
        <taxon>ant endosymbionts</taxon>
        <taxon>Candidatus Blochmanniella</taxon>
    </lineage>
</organism>
<sequence length="337" mass="38817">MFDRIWFKSSFFYLFLLPFSWLYGVISTLNRISYQYGWRKVYRFSVPIIIIGNLTIGGNGKTPMVLWLVEHLKRRGWKVGVISRGYKGKSNNYPIIINMNSHSEECGDEPMLIWKRTGVSVAVSPKRADAVAALLRKQELDIIISDDGLQHYALFRDIEWVIVNSVLRFGNGCWLPAGPMRERINRLHTVQAIIANGSEVGIQSGEVLMQLFPIAVVNILTGERKPLYFLNNVVAIAGIGYPTQFFDTLRSYGIIPIRSISFSDHHVYSEKMLTSLTKKDEILLMTEKDAVKCIDFAHDNWWYVHTEVKINKIDTHNLLSMVENKIRYYKGSRYNVQ</sequence>
<feature type="chain" id="PRO_0000229944" description="Tetraacyldisaccharide 4'-kinase">
    <location>
        <begin position="1"/>
        <end position="337"/>
    </location>
</feature>
<feature type="binding site" evidence="1">
    <location>
        <begin position="55"/>
        <end position="62"/>
    </location>
    <ligand>
        <name>ATP</name>
        <dbReference type="ChEBI" id="CHEBI:30616"/>
    </ligand>
</feature>
<comment type="function">
    <text evidence="1">Transfers the gamma-phosphate of ATP to the 4'-position of a tetraacyldisaccharide 1-phosphate intermediate (termed DS-1-P) to form tetraacyldisaccharide 1,4'-bis-phosphate (lipid IVA).</text>
</comment>
<comment type="catalytic activity">
    <reaction evidence="1">
        <text>a lipid A disaccharide + ATP = a lipid IVA + ADP + H(+)</text>
        <dbReference type="Rhea" id="RHEA:67840"/>
        <dbReference type="ChEBI" id="CHEBI:15378"/>
        <dbReference type="ChEBI" id="CHEBI:30616"/>
        <dbReference type="ChEBI" id="CHEBI:176343"/>
        <dbReference type="ChEBI" id="CHEBI:176425"/>
        <dbReference type="ChEBI" id="CHEBI:456216"/>
        <dbReference type="EC" id="2.7.1.130"/>
    </reaction>
</comment>
<comment type="pathway">
    <text evidence="1">Glycolipid biosynthesis; lipid IV(A) biosynthesis; lipid IV(A) from (3R)-3-hydroxytetradecanoyl-[acyl-carrier-protein] and UDP-N-acetyl-alpha-D-glucosamine: step 6/6.</text>
</comment>
<comment type="similarity">
    <text evidence="1">Belongs to the LpxK family.</text>
</comment>
<reference key="1">
    <citation type="journal article" date="2005" name="Genome Res.">
        <title>Genome sequence of Blochmannia pennsylvanicus indicates parallel evolutionary trends among bacterial mutualists of insects.</title>
        <authorList>
            <person name="Degnan P.H."/>
            <person name="Lazarus A.B."/>
            <person name="Wernegreen J.J."/>
        </authorList>
    </citation>
    <scope>NUCLEOTIDE SEQUENCE [LARGE SCALE GENOMIC DNA]</scope>
    <source>
        <strain>BPEN</strain>
    </source>
</reference>
<keyword id="KW-0067">ATP-binding</keyword>
<keyword id="KW-0418">Kinase</keyword>
<keyword id="KW-0441">Lipid A biosynthesis</keyword>
<keyword id="KW-0444">Lipid biosynthesis</keyword>
<keyword id="KW-0443">Lipid metabolism</keyword>
<keyword id="KW-0547">Nucleotide-binding</keyword>
<keyword id="KW-1185">Reference proteome</keyword>
<keyword id="KW-0808">Transferase</keyword>
<gene>
    <name evidence="1" type="primary">lpxK</name>
    <name type="ordered locus">BPEN_389</name>
</gene>
<dbReference type="EC" id="2.7.1.130" evidence="1"/>
<dbReference type="EMBL" id="CP000016">
    <property type="protein sequence ID" value="AAZ41013.1"/>
    <property type="molecule type" value="Genomic_DNA"/>
</dbReference>
<dbReference type="RefSeq" id="WP_011282922.1">
    <property type="nucleotide sequence ID" value="NC_007292.1"/>
</dbReference>
<dbReference type="SMR" id="Q492T0"/>
<dbReference type="STRING" id="291272.BPEN_389"/>
<dbReference type="KEGG" id="bpn:BPEN_389"/>
<dbReference type="eggNOG" id="COG1663">
    <property type="taxonomic scope" value="Bacteria"/>
</dbReference>
<dbReference type="HOGENOM" id="CLU_038816_2_0_6"/>
<dbReference type="OrthoDB" id="9766423at2"/>
<dbReference type="UniPathway" id="UPA00359">
    <property type="reaction ID" value="UER00482"/>
</dbReference>
<dbReference type="Proteomes" id="UP000007794">
    <property type="component" value="Chromosome"/>
</dbReference>
<dbReference type="GO" id="GO:0005886">
    <property type="term" value="C:plasma membrane"/>
    <property type="evidence" value="ECO:0007669"/>
    <property type="project" value="TreeGrafter"/>
</dbReference>
<dbReference type="GO" id="GO:0005524">
    <property type="term" value="F:ATP binding"/>
    <property type="evidence" value="ECO:0007669"/>
    <property type="project" value="UniProtKB-UniRule"/>
</dbReference>
<dbReference type="GO" id="GO:0009029">
    <property type="term" value="F:tetraacyldisaccharide 4'-kinase activity"/>
    <property type="evidence" value="ECO:0007669"/>
    <property type="project" value="UniProtKB-UniRule"/>
</dbReference>
<dbReference type="GO" id="GO:0009245">
    <property type="term" value="P:lipid A biosynthetic process"/>
    <property type="evidence" value="ECO:0007669"/>
    <property type="project" value="UniProtKB-UniRule"/>
</dbReference>
<dbReference type="GO" id="GO:0009244">
    <property type="term" value="P:lipopolysaccharide core region biosynthetic process"/>
    <property type="evidence" value="ECO:0007669"/>
    <property type="project" value="TreeGrafter"/>
</dbReference>
<dbReference type="HAMAP" id="MF_00409">
    <property type="entry name" value="LpxK"/>
    <property type="match status" value="1"/>
</dbReference>
<dbReference type="InterPro" id="IPR003758">
    <property type="entry name" value="LpxK"/>
</dbReference>
<dbReference type="InterPro" id="IPR027417">
    <property type="entry name" value="P-loop_NTPase"/>
</dbReference>
<dbReference type="NCBIfam" id="TIGR00682">
    <property type="entry name" value="lpxK"/>
    <property type="match status" value="1"/>
</dbReference>
<dbReference type="PANTHER" id="PTHR42724">
    <property type="entry name" value="TETRAACYLDISACCHARIDE 4'-KINASE"/>
    <property type="match status" value="1"/>
</dbReference>
<dbReference type="PANTHER" id="PTHR42724:SF1">
    <property type="entry name" value="TETRAACYLDISACCHARIDE 4'-KINASE, MITOCHONDRIAL-RELATED"/>
    <property type="match status" value="1"/>
</dbReference>
<dbReference type="Pfam" id="PF02606">
    <property type="entry name" value="LpxK"/>
    <property type="match status" value="1"/>
</dbReference>
<dbReference type="SUPFAM" id="SSF52540">
    <property type="entry name" value="P-loop containing nucleoside triphosphate hydrolases"/>
    <property type="match status" value="1"/>
</dbReference>
<protein>
    <recommendedName>
        <fullName evidence="1">Tetraacyldisaccharide 4'-kinase</fullName>
        <ecNumber evidence="1">2.7.1.130</ecNumber>
    </recommendedName>
    <alternativeName>
        <fullName evidence="1">Lipid A 4'-kinase</fullName>
    </alternativeName>
</protein>
<evidence type="ECO:0000255" key="1">
    <source>
        <dbReference type="HAMAP-Rule" id="MF_00409"/>
    </source>
</evidence>
<name>LPXK_BLOPB</name>
<proteinExistence type="inferred from homology"/>
<accession>Q492T0</accession>